<feature type="propeptide" id="PRO_0000341324" description="Removed in mature form" evidence="1">
    <location>
        <begin position="1"/>
        <end position="16"/>
    </location>
</feature>
<feature type="chain" id="PRO_0000341325" description="Proteasome subunit beta type-6-A like protein">
    <location>
        <begin position="17"/>
        <end position="217"/>
    </location>
</feature>
<feature type="active site" description="Nucleophile" evidence="1">
    <location>
        <position position="17"/>
    </location>
</feature>
<dbReference type="EC" id="3.4.25.1"/>
<dbReference type="EMBL" id="EF210363">
    <property type="protein sequence ID" value="ABQ01993.1"/>
    <property type="molecule type" value="Genomic_DNA"/>
</dbReference>
<dbReference type="EMBL" id="EF427384">
    <property type="protein sequence ID" value="ABQ59686.1"/>
    <property type="molecule type" value="Genomic_DNA"/>
</dbReference>
<dbReference type="RefSeq" id="XP_014032816.1">
    <property type="nucleotide sequence ID" value="XM_014177341.1"/>
</dbReference>
<dbReference type="SMR" id="A7KE01"/>
<dbReference type="MEROPS" id="T01.013"/>
<dbReference type="Ensembl" id="ENSSSAT00020107988">
    <property type="protein sequence ID" value="ENSSSAP00020079144"/>
    <property type="gene ID" value="ENSSSAG00020050394"/>
</dbReference>
<dbReference type="Ensembl" id="ENSSSAT00070039884">
    <property type="protein sequence ID" value="ENSSSAP00070038110"/>
    <property type="gene ID" value="ENSSSAG00070024865"/>
</dbReference>
<dbReference type="GeneID" id="106588399"/>
<dbReference type="KEGG" id="sasa:106588399"/>
<dbReference type="Proteomes" id="UP000087266">
    <property type="component" value="Chromosome ssa27"/>
</dbReference>
<dbReference type="GO" id="GO:0005737">
    <property type="term" value="C:cytoplasm"/>
    <property type="evidence" value="ECO:0007669"/>
    <property type="project" value="UniProtKB-SubCell"/>
</dbReference>
<dbReference type="GO" id="GO:0005634">
    <property type="term" value="C:nucleus"/>
    <property type="evidence" value="ECO:0007669"/>
    <property type="project" value="UniProtKB-SubCell"/>
</dbReference>
<dbReference type="GO" id="GO:0019774">
    <property type="term" value="C:proteasome core complex, beta-subunit complex"/>
    <property type="evidence" value="ECO:0000250"/>
    <property type="project" value="UniProtKB"/>
</dbReference>
<dbReference type="GO" id="GO:0004298">
    <property type="term" value="F:threonine-type endopeptidase activity"/>
    <property type="evidence" value="ECO:0007669"/>
    <property type="project" value="UniProtKB-KW"/>
</dbReference>
<dbReference type="GO" id="GO:0002376">
    <property type="term" value="P:immune system process"/>
    <property type="evidence" value="ECO:0007669"/>
    <property type="project" value="UniProtKB-KW"/>
</dbReference>
<dbReference type="GO" id="GO:0051603">
    <property type="term" value="P:proteolysis involved in protein catabolic process"/>
    <property type="evidence" value="ECO:0007669"/>
    <property type="project" value="InterPro"/>
</dbReference>
<dbReference type="CDD" id="cd03762">
    <property type="entry name" value="proteasome_beta_type_6"/>
    <property type="match status" value="1"/>
</dbReference>
<dbReference type="FunFam" id="3.60.20.10:FF:000069">
    <property type="entry name" value="Proteasome subunit beta 12"/>
    <property type="match status" value="1"/>
</dbReference>
<dbReference type="Gene3D" id="3.60.20.10">
    <property type="entry name" value="Glutamine Phosphoribosylpyrophosphate, subunit 1, domain 1"/>
    <property type="match status" value="1"/>
</dbReference>
<dbReference type="InterPro" id="IPR029055">
    <property type="entry name" value="Ntn_hydrolases_N"/>
</dbReference>
<dbReference type="InterPro" id="IPR000243">
    <property type="entry name" value="Pept_T1A_subB"/>
</dbReference>
<dbReference type="InterPro" id="IPR016050">
    <property type="entry name" value="Proteasome_bsu_CS"/>
</dbReference>
<dbReference type="InterPro" id="IPR001353">
    <property type="entry name" value="Proteasome_sua/b"/>
</dbReference>
<dbReference type="InterPro" id="IPR023333">
    <property type="entry name" value="Proteasome_suB-type"/>
</dbReference>
<dbReference type="PANTHER" id="PTHR32194:SF0">
    <property type="entry name" value="ATP-DEPENDENT PROTEASE SUBUNIT HSLV"/>
    <property type="match status" value="1"/>
</dbReference>
<dbReference type="PANTHER" id="PTHR32194">
    <property type="entry name" value="METALLOPROTEASE TLDD"/>
    <property type="match status" value="1"/>
</dbReference>
<dbReference type="Pfam" id="PF00227">
    <property type="entry name" value="Proteasome"/>
    <property type="match status" value="1"/>
</dbReference>
<dbReference type="PRINTS" id="PR00141">
    <property type="entry name" value="PROTEASOME"/>
</dbReference>
<dbReference type="SUPFAM" id="SSF56235">
    <property type="entry name" value="N-terminal nucleophile aminohydrolases (Ntn hydrolases)"/>
    <property type="match status" value="1"/>
</dbReference>
<dbReference type="PROSITE" id="PS00854">
    <property type="entry name" value="PROTEASOME_BETA_1"/>
    <property type="match status" value="1"/>
</dbReference>
<dbReference type="PROSITE" id="PS51476">
    <property type="entry name" value="PROTEASOME_BETA_2"/>
    <property type="match status" value="1"/>
</dbReference>
<accession>A7KE01</accession>
<comment type="function">
    <text evidence="1">The proteasome is a multicatalytic proteinase complex which is characterized by its ability to cleave peptides with Arg, Phe, Tyr, Leu, and Glu adjacent to the leaving group at neutral or slightly basic pH. The proteasome has an ATP-dependent proteolytic activity. This subunit is involved in antigen processing to generate class I binding peptides (By similarity).</text>
</comment>
<comment type="catalytic activity">
    <reaction>
        <text>Cleavage of peptide bonds with very broad specificity.</text>
        <dbReference type="EC" id="3.4.25.1"/>
    </reaction>
</comment>
<comment type="subunit">
    <text>The 26S proteasome consists of a 20S proteasome core and two 19S regulatory subunits. The 20S proteasome core is composed of 28 subunits that are arranged in four stacked rings, resulting in a barrel-shaped structure. The two end rings are each formed by seven alpha subunits, and the two central rings are each formed by seven beta subunits. The catalytic chamber with the active sites is on the inside of the barrel.</text>
</comment>
<comment type="subcellular location">
    <subcellularLocation>
        <location evidence="2">Cytoplasm</location>
    </subcellularLocation>
    <subcellularLocation>
        <location evidence="1">Nucleus</location>
    </subcellularLocation>
</comment>
<comment type="similarity">
    <text evidence="2">Belongs to the peptidase T1B family.</text>
</comment>
<organism>
    <name type="scientific">Salmo salar</name>
    <name type="common">Atlantic salmon</name>
    <dbReference type="NCBI Taxonomy" id="8030"/>
    <lineage>
        <taxon>Eukaryota</taxon>
        <taxon>Metazoa</taxon>
        <taxon>Chordata</taxon>
        <taxon>Craniata</taxon>
        <taxon>Vertebrata</taxon>
        <taxon>Euteleostomi</taxon>
        <taxon>Actinopterygii</taxon>
        <taxon>Neopterygii</taxon>
        <taxon>Teleostei</taxon>
        <taxon>Protacanthopterygii</taxon>
        <taxon>Salmoniformes</taxon>
        <taxon>Salmonidae</taxon>
        <taxon>Salmoninae</taxon>
        <taxon>Salmo</taxon>
    </lineage>
</organism>
<proteinExistence type="inferred from homology"/>
<evidence type="ECO:0000250" key="1"/>
<evidence type="ECO:0000255" key="2">
    <source>
        <dbReference type="PROSITE-ProRule" id="PRU00809"/>
    </source>
</evidence>
<reference key="1">
    <citation type="journal article" date="2007" name="BMC Genomics">
        <title>Genomic organization of duplicated major histocompatibility complex class I regions in Atlantic salmon (Salmo salar).</title>
        <authorList>
            <person name="Lukacs M.F."/>
            <person name="Harstad H."/>
            <person name="Grimholt U."/>
            <person name="Beetz-Sargent M."/>
            <person name="Cooper G.A."/>
            <person name="Reid L."/>
            <person name="Bakke H.G."/>
            <person name="Phillips R.B."/>
            <person name="Miller K.M."/>
            <person name="Davidson W.S."/>
            <person name="Koop B.F."/>
        </authorList>
    </citation>
    <scope>NUCLEOTIDE SEQUENCE [GENOMIC DNA]</scope>
</reference>
<name>PB6LA_SALSA</name>
<keyword id="KW-0963">Cytoplasm</keyword>
<keyword id="KW-0378">Hydrolase</keyword>
<keyword id="KW-0391">Immunity</keyword>
<keyword id="KW-0539">Nucleus</keyword>
<keyword id="KW-0645">Protease</keyword>
<keyword id="KW-0647">Proteasome</keyword>
<keyword id="KW-1185">Reference proteome</keyword>
<keyword id="KW-0888">Threonine protease</keyword>
<keyword id="KW-0865">Zymogen</keyword>
<gene>
    <name type="primary">psmb6l-a</name>
    <name type="synonym">lmp2-delta-a</name>
</gene>
<sequence length="217" mass="23201">MERHLMDSQIKGVSTGTTILAVTFNGGVIIGSDSRASIGGSYVSSKTINKLIQVHDRIFCCIAGSLADAQAVTKAAKFQISFHSIQMESPPLVKAAASVLKELCYNNKEELQAGFITAGWDRKKGPQVYTVALGGMLLSQPFTIGGSGSTYIYGYADAKYKPDMSKEECLQFAKNALALAMGRDNVSGGVAHLVVITEEGVEHVVIPGDKLPKFHDE</sequence>
<protein>
    <recommendedName>
        <fullName>Proteasome subunit beta type-6-A like protein</fullName>
        <ecNumber>3.4.25.1</ecNumber>
    </recommendedName>
    <alternativeName>
        <fullName>Low molecular mass protein 2-delta-A</fullName>
    </alternativeName>
</protein>